<organism>
    <name type="scientific">Emericella nidulans (strain FGSC A4 / ATCC 38163 / CBS 112.46 / NRRL 194 / M139)</name>
    <name type="common">Aspergillus nidulans</name>
    <dbReference type="NCBI Taxonomy" id="227321"/>
    <lineage>
        <taxon>Eukaryota</taxon>
        <taxon>Fungi</taxon>
        <taxon>Dikarya</taxon>
        <taxon>Ascomycota</taxon>
        <taxon>Pezizomycotina</taxon>
        <taxon>Eurotiomycetes</taxon>
        <taxon>Eurotiomycetidae</taxon>
        <taxon>Eurotiales</taxon>
        <taxon>Aspergillaceae</taxon>
        <taxon>Aspergillus</taxon>
        <taxon>Aspergillus subgen. Nidulantes</taxon>
    </lineage>
</organism>
<proteinExistence type="inferred from homology"/>
<sequence length="214" mass="23407">MTSLKSLFLSFFLVVALGLALVNASEPRGPKITNKVYFDIQHGDESLGRIVLGLYGKTVPETAENFRALATGEKGFGYEGSNFHRVIKDFMIQGGDFTRGDGTGGKSIYGAKFKDENFKLRHTKTGLLSMANAGKDTNGSQFFITTAVTPWLDGKHVVFGEVLEGYDIVDKIQNVPKGRNDRPLKDVKIVKSGELEMEADVANEGDKKGSHNEL</sequence>
<keyword id="KW-0256">Endoplasmic reticulum</keyword>
<keyword id="KW-0325">Glycoprotein</keyword>
<keyword id="KW-0413">Isomerase</keyword>
<keyword id="KW-1185">Reference proteome</keyword>
<keyword id="KW-0697">Rotamase</keyword>
<keyword id="KW-0732">Signal</keyword>
<dbReference type="EC" id="5.2.1.8"/>
<dbReference type="EMBL" id="AF107254">
    <property type="protein sequence ID" value="AAD17998.1"/>
    <property type="molecule type" value="Genomic_DNA"/>
</dbReference>
<dbReference type="EMBL" id="AACD01000077">
    <property type="protein sequence ID" value="EAA60232.1"/>
    <property type="molecule type" value="Genomic_DNA"/>
</dbReference>
<dbReference type="EMBL" id="BN001303">
    <property type="protein sequence ID" value="CBF77459.1"/>
    <property type="molecule type" value="Genomic_DNA"/>
</dbReference>
<dbReference type="RefSeq" id="XP_662071.1">
    <property type="nucleotide sequence ID" value="XM_656979.1"/>
</dbReference>
<dbReference type="SMR" id="Q5B4R3"/>
<dbReference type="FunCoup" id="Q5B4R3">
    <property type="interactions" value="230"/>
</dbReference>
<dbReference type="STRING" id="227321.Q5B4R3"/>
<dbReference type="GlyCosmos" id="Q5B4R3">
    <property type="glycosylation" value="1 site, No reported glycans"/>
</dbReference>
<dbReference type="EnsemblFungi" id="CBF77459">
    <property type="protein sequence ID" value="CBF77459"/>
    <property type="gene ID" value="ANIA_04467"/>
</dbReference>
<dbReference type="KEGG" id="ani:ANIA_04467"/>
<dbReference type="eggNOG" id="KOG0880">
    <property type="taxonomic scope" value="Eukaryota"/>
</dbReference>
<dbReference type="HOGENOM" id="CLU_012062_4_2_1"/>
<dbReference type="InParanoid" id="Q5B4R3"/>
<dbReference type="OMA" id="HPGDRPK"/>
<dbReference type="OrthoDB" id="193499at2759"/>
<dbReference type="Proteomes" id="UP000000560">
    <property type="component" value="Chromosome III"/>
</dbReference>
<dbReference type="GO" id="GO:0005737">
    <property type="term" value="C:cytoplasm"/>
    <property type="evidence" value="ECO:0000318"/>
    <property type="project" value="GO_Central"/>
</dbReference>
<dbReference type="GO" id="GO:0005783">
    <property type="term" value="C:endoplasmic reticulum"/>
    <property type="evidence" value="ECO:0000318"/>
    <property type="project" value="GO_Central"/>
</dbReference>
<dbReference type="GO" id="GO:0005788">
    <property type="term" value="C:endoplasmic reticulum lumen"/>
    <property type="evidence" value="ECO:0007669"/>
    <property type="project" value="UniProtKB-SubCell"/>
</dbReference>
<dbReference type="GO" id="GO:0016018">
    <property type="term" value="F:cyclosporin A binding"/>
    <property type="evidence" value="ECO:0000318"/>
    <property type="project" value="GO_Central"/>
</dbReference>
<dbReference type="GO" id="GO:0003755">
    <property type="term" value="F:peptidyl-prolyl cis-trans isomerase activity"/>
    <property type="evidence" value="ECO:0000318"/>
    <property type="project" value="GO_Central"/>
</dbReference>
<dbReference type="GO" id="GO:0006457">
    <property type="term" value="P:protein folding"/>
    <property type="evidence" value="ECO:0000318"/>
    <property type="project" value="GO_Central"/>
</dbReference>
<dbReference type="CDD" id="cd01926">
    <property type="entry name" value="cyclophilin_ABH_like"/>
    <property type="match status" value="1"/>
</dbReference>
<dbReference type="FunFam" id="2.40.100.10:FF:000001">
    <property type="entry name" value="Peptidyl-prolyl cis-trans isomerase"/>
    <property type="match status" value="1"/>
</dbReference>
<dbReference type="Gene3D" id="2.40.100.10">
    <property type="entry name" value="Cyclophilin-like"/>
    <property type="match status" value="1"/>
</dbReference>
<dbReference type="InterPro" id="IPR029000">
    <property type="entry name" value="Cyclophilin-like_dom_sf"/>
</dbReference>
<dbReference type="InterPro" id="IPR020892">
    <property type="entry name" value="Cyclophilin-type_PPIase_CS"/>
</dbReference>
<dbReference type="InterPro" id="IPR002130">
    <property type="entry name" value="Cyclophilin-type_PPIase_dom"/>
</dbReference>
<dbReference type="PANTHER" id="PTHR11071">
    <property type="entry name" value="PEPTIDYL-PROLYL CIS-TRANS ISOMERASE"/>
    <property type="match status" value="1"/>
</dbReference>
<dbReference type="PANTHER" id="PTHR11071:SF561">
    <property type="entry name" value="PEPTIDYL-PROLYL CIS-TRANS ISOMERASE D-RELATED"/>
    <property type="match status" value="1"/>
</dbReference>
<dbReference type="Pfam" id="PF00160">
    <property type="entry name" value="Pro_isomerase"/>
    <property type="match status" value="1"/>
</dbReference>
<dbReference type="PRINTS" id="PR00153">
    <property type="entry name" value="CSAPPISMRASE"/>
</dbReference>
<dbReference type="SUPFAM" id="SSF50891">
    <property type="entry name" value="Cyclophilin-like"/>
    <property type="match status" value="1"/>
</dbReference>
<dbReference type="PROSITE" id="PS00170">
    <property type="entry name" value="CSA_PPIASE_1"/>
    <property type="match status" value="1"/>
</dbReference>
<dbReference type="PROSITE" id="PS50072">
    <property type="entry name" value="CSA_PPIASE_2"/>
    <property type="match status" value="1"/>
</dbReference>
<dbReference type="PROSITE" id="PS00014">
    <property type="entry name" value="ER_TARGET"/>
    <property type="match status" value="1"/>
</dbReference>
<gene>
    <name type="primary">cpr2</name>
    <name type="ORF">AN4467</name>
</gene>
<reference key="1">
    <citation type="journal article" date="1999" name="Fungal Genet. Biol.">
        <title>Molecular cloning and characterization of Aspergillus nidulans cyclophilin B.</title>
        <authorList>
            <person name="Joseph J.D."/>
            <person name="Heitman J."/>
            <person name="Means A.R."/>
        </authorList>
    </citation>
    <scope>NUCLEOTIDE SEQUENCE [GENOMIC DNA]</scope>
</reference>
<reference key="2">
    <citation type="journal article" date="2005" name="Nature">
        <title>Sequencing of Aspergillus nidulans and comparative analysis with A. fumigatus and A. oryzae.</title>
        <authorList>
            <person name="Galagan J.E."/>
            <person name="Calvo S.E."/>
            <person name="Cuomo C."/>
            <person name="Ma L.-J."/>
            <person name="Wortman J.R."/>
            <person name="Batzoglou S."/>
            <person name="Lee S.-I."/>
            <person name="Bastuerkmen M."/>
            <person name="Spevak C.C."/>
            <person name="Clutterbuck J."/>
            <person name="Kapitonov V."/>
            <person name="Jurka J."/>
            <person name="Scazzocchio C."/>
            <person name="Farman M.L."/>
            <person name="Butler J."/>
            <person name="Purcell S."/>
            <person name="Harris S."/>
            <person name="Braus G.H."/>
            <person name="Draht O."/>
            <person name="Busch S."/>
            <person name="D'Enfert C."/>
            <person name="Bouchier C."/>
            <person name="Goldman G.H."/>
            <person name="Bell-Pedersen D."/>
            <person name="Griffiths-Jones S."/>
            <person name="Doonan J.H."/>
            <person name="Yu J."/>
            <person name="Vienken K."/>
            <person name="Pain A."/>
            <person name="Freitag M."/>
            <person name="Selker E.U."/>
            <person name="Archer D.B."/>
            <person name="Penalva M.A."/>
            <person name="Oakley B.R."/>
            <person name="Momany M."/>
            <person name="Tanaka T."/>
            <person name="Kumagai T."/>
            <person name="Asai K."/>
            <person name="Machida M."/>
            <person name="Nierman W.C."/>
            <person name="Denning D.W."/>
            <person name="Caddick M.X."/>
            <person name="Hynes M."/>
            <person name="Paoletti M."/>
            <person name="Fischer R."/>
            <person name="Miller B.L."/>
            <person name="Dyer P.S."/>
            <person name="Sachs M.S."/>
            <person name="Osmani S.A."/>
            <person name="Birren B.W."/>
        </authorList>
    </citation>
    <scope>NUCLEOTIDE SEQUENCE [LARGE SCALE GENOMIC DNA]</scope>
    <source>
        <strain>FGSC A4 / ATCC 38163 / CBS 112.46 / NRRL 194 / M139</strain>
    </source>
</reference>
<reference key="3">
    <citation type="journal article" date="2009" name="Fungal Genet. Biol.">
        <title>The 2008 update of the Aspergillus nidulans genome annotation: a community effort.</title>
        <authorList>
            <person name="Wortman J.R."/>
            <person name="Gilsenan J.M."/>
            <person name="Joardar V."/>
            <person name="Deegan J."/>
            <person name="Clutterbuck J."/>
            <person name="Andersen M.R."/>
            <person name="Archer D."/>
            <person name="Bencina M."/>
            <person name="Braus G."/>
            <person name="Coutinho P."/>
            <person name="von Dohren H."/>
            <person name="Doonan J."/>
            <person name="Driessen A.J."/>
            <person name="Durek P."/>
            <person name="Espeso E."/>
            <person name="Fekete E."/>
            <person name="Flipphi M."/>
            <person name="Estrada C.G."/>
            <person name="Geysens S."/>
            <person name="Goldman G."/>
            <person name="de Groot P.W."/>
            <person name="Hansen K."/>
            <person name="Harris S.D."/>
            <person name="Heinekamp T."/>
            <person name="Helmstaedt K."/>
            <person name="Henrissat B."/>
            <person name="Hofmann G."/>
            <person name="Homan T."/>
            <person name="Horio T."/>
            <person name="Horiuchi H."/>
            <person name="James S."/>
            <person name="Jones M."/>
            <person name="Karaffa L."/>
            <person name="Karanyi Z."/>
            <person name="Kato M."/>
            <person name="Keller N."/>
            <person name="Kelly D.E."/>
            <person name="Kiel J.A."/>
            <person name="Kim J.M."/>
            <person name="van der Klei I.J."/>
            <person name="Klis F.M."/>
            <person name="Kovalchuk A."/>
            <person name="Krasevec N."/>
            <person name="Kubicek C.P."/>
            <person name="Liu B."/>
            <person name="Maccabe A."/>
            <person name="Meyer V."/>
            <person name="Mirabito P."/>
            <person name="Miskei M."/>
            <person name="Mos M."/>
            <person name="Mullins J."/>
            <person name="Nelson D.R."/>
            <person name="Nielsen J."/>
            <person name="Oakley B.R."/>
            <person name="Osmani S.A."/>
            <person name="Pakula T."/>
            <person name="Paszewski A."/>
            <person name="Paulsen I."/>
            <person name="Pilsyk S."/>
            <person name="Pocsi I."/>
            <person name="Punt P.J."/>
            <person name="Ram A.F."/>
            <person name="Ren Q."/>
            <person name="Robellet X."/>
            <person name="Robson G."/>
            <person name="Seiboth B."/>
            <person name="van Solingen P."/>
            <person name="Specht T."/>
            <person name="Sun J."/>
            <person name="Taheri-Talesh N."/>
            <person name="Takeshita N."/>
            <person name="Ussery D."/>
            <person name="vanKuyk P.A."/>
            <person name="Visser H."/>
            <person name="van de Vondervoort P.J."/>
            <person name="de Vries R.P."/>
            <person name="Walton J."/>
            <person name="Xiang X."/>
            <person name="Xiong Y."/>
            <person name="Zeng A.P."/>
            <person name="Brandt B.W."/>
            <person name="Cornell M.J."/>
            <person name="van den Hondel C.A."/>
            <person name="Visser J."/>
            <person name="Oliver S.G."/>
            <person name="Turner G."/>
        </authorList>
    </citation>
    <scope>GENOME REANNOTATION</scope>
    <source>
        <strain>FGSC A4 / ATCC 38163 / CBS 112.46 / NRRL 194 / M139</strain>
    </source>
</reference>
<protein>
    <recommendedName>
        <fullName>Peptidyl-prolyl cis-trans isomerase B</fullName>
        <shortName>PPIase B</shortName>
        <ecNumber>5.2.1.8</ecNumber>
    </recommendedName>
    <alternativeName>
        <fullName>Rotamase B</fullName>
    </alternativeName>
</protein>
<name>PPIB_EMENI</name>
<feature type="signal peptide" evidence="2">
    <location>
        <begin position="1"/>
        <end position="24"/>
    </location>
</feature>
<feature type="chain" id="PRO_0000233047" description="Peptidyl-prolyl cis-trans isomerase B">
    <location>
        <begin position="25"/>
        <end position="214"/>
    </location>
</feature>
<feature type="domain" description="PPIase cyclophilin-type" evidence="3">
    <location>
        <begin position="37"/>
        <end position="194"/>
    </location>
</feature>
<feature type="short sequence motif" description="Prevents secretion from ER">
    <location>
        <begin position="211"/>
        <end position="214"/>
    </location>
</feature>
<feature type="glycosylation site" description="N-linked (GlcNAc...) asparagine" evidence="2">
    <location>
        <position position="138"/>
    </location>
</feature>
<comment type="function">
    <text evidence="1">PPIases accelerate the folding of proteins. It catalyzes the cis-trans isomerization of proline imidic peptide bonds in oligopeptides (By similarity).</text>
</comment>
<comment type="catalytic activity">
    <reaction>
        <text>[protein]-peptidylproline (omega=180) = [protein]-peptidylproline (omega=0)</text>
        <dbReference type="Rhea" id="RHEA:16237"/>
        <dbReference type="Rhea" id="RHEA-COMP:10747"/>
        <dbReference type="Rhea" id="RHEA-COMP:10748"/>
        <dbReference type="ChEBI" id="CHEBI:83833"/>
        <dbReference type="ChEBI" id="CHEBI:83834"/>
        <dbReference type="EC" id="5.2.1.8"/>
    </reaction>
</comment>
<comment type="activity regulation">
    <text evidence="1">Inhibited by cyclosporin A (CsA).</text>
</comment>
<comment type="subcellular location">
    <subcellularLocation>
        <location evidence="4">Endoplasmic reticulum lumen</location>
    </subcellularLocation>
</comment>
<comment type="similarity">
    <text evidence="5">Belongs to the cyclophilin-type PPIase family. PPIase B subfamily.</text>
</comment>
<evidence type="ECO:0000250" key="1"/>
<evidence type="ECO:0000255" key="2"/>
<evidence type="ECO:0000255" key="3">
    <source>
        <dbReference type="PROSITE-ProRule" id="PRU00156"/>
    </source>
</evidence>
<evidence type="ECO:0000255" key="4">
    <source>
        <dbReference type="PROSITE-ProRule" id="PRU10138"/>
    </source>
</evidence>
<evidence type="ECO:0000305" key="5"/>
<accession>Q5B4R3</accession>
<accession>C8V8H3</accession>
<accession>O94190</accession>